<organismHost>
    <name type="scientific">Bacillus subtilis</name>
    <dbReference type="NCBI Taxonomy" id="1423"/>
</organismHost>
<evidence type="ECO:0000250" key="1">
    <source>
        <dbReference type="UniProtKB" id="B3VMP4"/>
    </source>
</evidence>
<evidence type="ECO:0000305" key="2"/>
<protein>
    <recommendedName>
        <fullName evidence="1">Capsid fiber protein</fullName>
    </recommendedName>
    <alternativeName>
        <fullName evidence="1">Gene product 8.5</fullName>
        <shortName evidence="1">gp8.5</shortName>
    </alternativeName>
    <alternativeName>
        <fullName evidence="1">Head fiber protein</fullName>
    </alternativeName>
    <alternativeName>
        <fullName evidence="1">Protein p8.5</fullName>
    </alternativeName>
</protein>
<comment type="function">
    <text evidence="1">Protein that forms the 55 capsid fibers. These fibers are not always present and may have been lost in some lab strains. They may enhance the attachment of the virions onto the host cell wall.</text>
</comment>
<comment type="subunit">
    <text evidence="1">Homotrimer. Forms a super helix coiled coil in the homotrimer.</text>
</comment>
<comment type="subcellular location">
    <subcellularLocation>
        <location evidence="1">Virion</location>
    </subcellularLocation>
</comment>
<comment type="similarity">
    <text evidence="2">Belongs to the phi29likevirus major capsid fiber protein family.</text>
</comment>
<dbReference type="EMBL" id="M11813">
    <property type="protein sequence ID" value="AAA88485.1"/>
    <property type="molecule type" value="Genomic_DNA"/>
</dbReference>
<dbReference type="PIR" id="C24831">
    <property type="entry name" value="WMBP8H"/>
</dbReference>
<dbReference type="SMR" id="P07532"/>
<dbReference type="Proteomes" id="UP000000855">
    <property type="component" value="Segment"/>
</dbReference>
<dbReference type="GO" id="GO:0044423">
    <property type="term" value="C:virion component"/>
    <property type="evidence" value="ECO:0007669"/>
    <property type="project" value="UniProtKB-KW"/>
</dbReference>
<dbReference type="GO" id="GO:0046718">
    <property type="term" value="P:symbiont entry into host cell"/>
    <property type="evidence" value="ECO:0007669"/>
    <property type="project" value="UniProtKB-KW"/>
</dbReference>
<dbReference type="GO" id="GO:0019062">
    <property type="term" value="P:virion attachment to host cell"/>
    <property type="evidence" value="ECO:0007669"/>
    <property type="project" value="UniProtKB-KW"/>
</dbReference>
<dbReference type="Gene3D" id="6.10.140.1630">
    <property type="match status" value="1"/>
</dbReference>
<dbReference type="InterPro" id="IPR022741">
    <property type="entry name" value="Phage_B103_Gp8"/>
</dbReference>
<dbReference type="Pfam" id="PF11133">
    <property type="entry name" value="Phage_head_fibr"/>
    <property type="match status" value="1"/>
</dbReference>
<gene>
    <name type="primary">8.5</name>
</gene>
<sequence length="280" mass="29457">MMVSFTARANSNILAYRLLAYSEGDDIIEISHAAENTIPDYVAVKDVDKGDLTQVNMYPLAAWQVIAGSDIKVGDNLTTGKDGTAVPTDDPSVVFGYAVEEAQEGQLVTLIISRSKEISIEVDDIKDAGDTGKRLLKINTPSGARNIIIENEDAKALINGETTNTNKKNLQDLLFSDGNVKAFLQANTTDENKAALQQLMVSNADVLGLLSGAPSSENKVNIRSMIGAGVPYTLPAATTTTIGGVKKGAAVSASTATDVTNAVKDLNSLITVLKNAGIIS</sequence>
<feature type="chain" id="PRO_0000106580" description="Capsid fiber protein">
    <location>
        <begin position="1"/>
        <end position="280"/>
    </location>
</feature>
<accession>P07532</accession>
<reference key="1">
    <citation type="journal article" date="1986" name="Gene">
        <title>Nucleotide sequence of the late region of Bacillus subtilis phage PZA, a close relative of phi 29.</title>
        <authorList>
            <person name="Paces V."/>
            <person name="Vlcek C."/>
            <person name="Urbanek P."/>
        </authorList>
    </citation>
    <scope>NUCLEOTIDE SEQUENCE [GENOMIC DNA]</scope>
</reference>
<name>CAPSF_BPPZA</name>
<organism>
    <name type="scientific">Bacillus phage PZA</name>
    <name type="common">Bacteriophage PZA</name>
    <dbReference type="NCBI Taxonomy" id="10757"/>
    <lineage>
        <taxon>Viruses</taxon>
        <taxon>Duplodnaviria</taxon>
        <taxon>Heunggongvirae</taxon>
        <taxon>Uroviricota</taxon>
        <taxon>Caudoviricetes</taxon>
        <taxon>Salasmaviridae</taxon>
        <taxon>Picovirinae</taxon>
        <taxon>Salasvirus</taxon>
        <taxon>Salasvirus PZA</taxon>
    </lineage>
</organism>
<keyword id="KW-0945">Host-virus interaction</keyword>
<keyword id="KW-0426">Late protein</keyword>
<keyword id="KW-1161">Viral attachment to host cell</keyword>
<keyword id="KW-0946">Virion</keyword>
<keyword id="KW-1160">Virus entry into host cell</keyword>
<proteinExistence type="inferred from homology"/>